<protein>
    <recommendedName>
        <fullName>Cytochrome B pre-mRNA-processing protein 2</fullName>
    </recommendedName>
</protein>
<evidence type="ECO:0000250" key="1"/>
<sequence length="630" mass="73725">MVNWQTLFMVSLRRQGSSSRYRYKFNMENITHQVFPRCKQAFKKANLSYEYCDLEGKLYNASLMDLQKMLLRDINAPRDHVFKIVRTDLVEKSSKKRIQHWEQIAPIFDHPLSLYENLLSEMDNDFKPSFEWQQLIEVRSRDDQLKLQRVVWPKSIFSNFCRGIGVKKNTYDRLLKQNNGEVPMFVNPANAKPLPLFQVGDDATIGEFDGIGIFPYFVVKHRAFFVTEVDKLKTKIISPLCNLNERKRTDKANAGRLLENEKGEPFYVDAKGAASRAADGNAVTLKQLLERSVSHKTLWSKQTNKDRTCPGDILRATILSNDFSIRQLRTEFCKNFILYNIFTILQRNKKSIRDFSNDNNVPSFRFNWNVWDSYIWKQYQEAESMTLPADQASLINYKTKYDSFLQDLQTYSTLVISEMKWNQFSIFQNNETSLSRFEHITLILQTILTKSKMIRIFQPNLYKFMQDDLRATLMELTGFTESINATIGPGFANEQSLQSANALKKLANQLLHFEQKIYAEKFRVNRPIQLRPLTLSTNFKIVILDKQNAIPEIFQTLLKFTTQITTYFVKDLSEVELHGHMHCIDKKMLDKSTFMYLYELKYNEDLKAVPPQKEKIVDNIIGLLSNDEEH</sequence>
<keyword id="KW-0496">Mitochondrion</keyword>
<keyword id="KW-0507">mRNA processing</keyword>
<keyword id="KW-0508">mRNA splicing</keyword>
<comment type="function">
    <text evidence="1">Appears to be specifically required for the splicing of the terminal intron (bI5) of the cytochrome b pre-mRNA. Can also stimulates the splicing of the omega intron of the precursor of large ribosomal RNA (By similarity).</text>
</comment>
<comment type="subcellular location">
    <subcellularLocation>
        <location evidence="1">Mitochondrion</location>
    </subcellularLocation>
</comment>
<reference key="1">
    <citation type="journal article" date="1996" name="Mol. Gen. Genet.">
        <title>The CBP2 gene from Saccharomyces douglasii is a functional homologue of the Saccharomyces cerevisiae gene and is essential for respiratory growth in the presence of a wild-type (intron containing) mitochondrial genome.</title>
        <authorList>
            <person name="Li G.Y."/>
            <person name="Tian G.L."/>
            <person name="Slonimski P.P."/>
            <person name="Herbert C.J."/>
        </authorList>
    </citation>
    <scope>NUCLEOTIDE SEQUENCE [GENOMIC DNA]</scope>
</reference>
<organism>
    <name type="scientific">Saccharomyces paradoxus</name>
    <name type="common">Yeast</name>
    <name type="synonym">Saccharomyces douglasii</name>
    <dbReference type="NCBI Taxonomy" id="27291"/>
    <lineage>
        <taxon>Eukaryota</taxon>
        <taxon>Fungi</taxon>
        <taxon>Dikarya</taxon>
        <taxon>Ascomycota</taxon>
        <taxon>Saccharomycotina</taxon>
        <taxon>Saccharomycetes</taxon>
        <taxon>Saccharomycetales</taxon>
        <taxon>Saccharomycetaceae</taxon>
        <taxon>Saccharomyces</taxon>
    </lineage>
</organism>
<feature type="chain" id="PRO_0000089379" description="Cytochrome B pre-mRNA-processing protein 2">
    <location>
        <begin position="1"/>
        <end position="630"/>
    </location>
</feature>
<proteinExistence type="inferred from homology"/>
<gene>
    <name type="primary">CBP2</name>
</gene>
<dbReference type="EMBL" id="X94370">
    <property type="protein sequence ID" value="CAA64148.1"/>
    <property type="molecule type" value="Genomic_DNA"/>
</dbReference>
<dbReference type="VEuPathDB" id="FungiDB:SPAR_H00050"/>
<dbReference type="GO" id="GO:0005739">
    <property type="term" value="C:mitochondrion"/>
    <property type="evidence" value="ECO:0007669"/>
    <property type="project" value="UniProtKB-SubCell"/>
</dbReference>
<dbReference type="GO" id="GO:0003723">
    <property type="term" value="F:RNA binding"/>
    <property type="evidence" value="ECO:0007669"/>
    <property type="project" value="InterPro"/>
</dbReference>
<dbReference type="GO" id="GO:0000372">
    <property type="term" value="P:Group I intron splicing"/>
    <property type="evidence" value="ECO:0007669"/>
    <property type="project" value="InterPro"/>
</dbReference>
<dbReference type="GO" id="GO:0006397">
    <property type="term" value="P:mRNA processing"/>
    <property type="evidence" value="ECO:0007669"/>
    <property type="project" value="UniProtKB-KW"/>
</dbReference>
<dbReference type="InterPro" id="IPR016424">
    <property type="entry name" value="Cbp2"/>
</dbReference>
<dbReference type="PIRSF" id="PIRSF004611">
    <property type="entry name" value="CBP2"/>
    <property type="match status" value="1"/>
</dbReference>
<accession>Q08996</accession>
<name>CBP2_SACPA</name>